<evidence type="ECO:0000250" key="1"/>
<evidence type="ECO:0000255" key="2"/>
<evidence type="ECO:0000305" key="3"/>
<feature type="signal peptide" evidence="2">
    <location>
        <begin position="1"/>
        <end position="30"/>
    </location>
</feature>
<feature type="chain" id="PRO_0000401911" description="U20-lycotoxin-Ls1c">
    <location>
        <begin position="31"/>
        <end position="104"/>
    </location>
</feature>
<feature type="domain" description="WAP">
    <location>
        <begin position="31"/>
        <end position="76"/>
    </location>
</feature>
<feature type="disulfide bond" evidence="1">
    <location>
        <begin position="34"/>
        <end position="64"/>
    </location>
</feature>
<feature type="disulfide bond" evidence="1">
    <location>
        <begin position="42"/>
        <end position="68"/>
    </location>
</feature>
<feature type="disulfide bond" evidence="1">
    <location>
        <begin position="51"/>
        <end position="63"/>
    </location>
</feature>
<feature type="disulfide bond" evidence="3">
    <location>
        <begin position="52"/>
        <end position="90"/>
    </location>
</feature>
<feature type="disulfide bond" evidence="1">
    <location>
        <begin position="57"/>
        <end position="72"/>
    </location>
</feature>
<accession>B6DD62</accession>
<comment type="function">
    <text evidence="1">Has antibacterial activity.</text>
</comment>
<comment type="subcellular location">
    <subcellularLocation>
        <location evidence="1">Secreted</location>
    </subcellularLocation>
</comment>
<comment type="tissue specificity">
    <text>Expressed by the venom gland.</text>
</comment>
<comment type="PTM">
    <text evidence="3">Contains 5 disulfide bonds.</text>
</comment>
<comment type="similarity">
    <text evidence="3">Belongs to the venom protein 11 family. 02 (wap-2) subfamily.</text>
</comment>
<name>TXK03_LYCSI</name>
<keyword id="KW-0044">Antibiotic</keyword>
<keyword id="KW-0929">Antimicrobial</keyword>
<keyword id="KW-1015">Disulfide bond</keyword>
<keyword id="KW-0964">Secreted</keyword>
<keyword id="KW-0732">Signal</keyword>
<keyword id="KW-0800">Toxin</keyword>
<reference key="1">
    <citation type="journal article" date="2010" name="Zoology">
        <title>Transcriptome analysis of the venom glands of the Chinese wolf spider Lycosa singoriensis.</title>
        <authorList>
            <person name="Zhang Y."/>
            <person name="Chen J."/>
            <person name="Tang X."/>
            <person name="Wang F."/>
            <person name="Jiang L."/>
            <person name="Xiong X."/>
            <person name="Wang M."/>
            <person name="Rong M."/>
            <person name="Liu Z."/>
            <person name="Liang S."/>
        </authorList>
    </citation>
    <scope>NUCLEOTIDE SEQUENCE [LARGE SCALE MRNA]</scope>
    <source>
        <tissue>Venom gland</tissue>
    </source>
</reference>
<protein>
    <recommendedName>
        <fullName>U20-lycotoxin-Ls1c</fullName>
    </recommendedName>
    <alternativeName>
        <fullName>Toxin-like structure LSTX-Q3</fullName>
    </alternativeName>
</protein>
<proteinExistence type="evidence at transcript level"/>
<sequence length="104" mass="11401">MFSTSDQVSKMNSRILSALLILGIATCVIAGGFCPKSRHPQCDLSYKINDCCAQSDCRVGSVCCVEGCGNVCRAESDTPLGEKFVDGSECKHGHVFPKKWYQFW</sequence>
<dbReference type="EMBL" id="EU926146">
    <property type="protein sequence ID" value="ACI41478.1"/>
    <property type="molecule type" value="mRNA"/>
</dbReference>
<dbReference type="EMBL" id="FM864150">
    <property type="protein sequence ID" value="CAS03747.1"/>
    <property type="molecule type" value="mRNA"/>
</dbReference>
<dbReference type="SMR" id="B6DD62"/>
<dbReference type="ArachnoServer" id="AS001085">
    <property type="toxin name" value="U20-lycotoxin-Ls1c"/>
</dbReference>
<dbReference type="GO" id="GO:0005576">
    <property type="term" value="C:extracellular region"/>
    <property type="evidence" value="ECO:0007669"/>
    <property type="project" value="UniProtKB-SubCell"/>
</dbReference>
<dbReference type="GO" id="GO:0090729">
    <property type="term" value="F:toxin activity"/>
    <property type="evidence" value="ECO:0007669"/>
    <property type="project" value="UniProtKB-KW"/>
</dbReference>
<dbReference type="GO" id="GO:0042742">
    <property type="term" value="P:defense response to bacterium"/>
    <property type="evidence" value="ECO:0007669"/>
    <property type="project" value="UniProtKB-KW"/>
</dbReference>
<dbReference type="InterPro" id="IPR036645">
    <property type="entry name" value="Elafin-like_sf"/>
</dbReference>
<dbReference type="SUPFAM" id="SSF57256">
    <property type="entry name" value="Elafin-like"/>
    <property type="match status" value="1"/>
</dbReference>
<organism>
    <name type="scientific">Lycosa singoriensis</name>
    <name type="common">Wolf spider</name>
    <name type="synonym">Aranea singoriensis</name>
    <dbReference type="NCBI Taxonomy" id="434756"/>
    <lineage>
        <taxon>Eukaryota</taxon>
        <taxon>Metazoa</taxon>
        <taxon>Ecdysozoa</taxon>
        <taxon>Arthropoda</taxon>
        <taxon>Chelicerata</taxon>
        <taxon>Arachnida</taxon>
        <taxon>Araneae</taxon>
        <taxon>Araneomorphae</taxon>
        <taxon>Entelegynae</taxon>
        <taxon>Lycosoidea</taxon>
        <taxon>Lycosidae</taxon>
        <taxon>Lycosa</taxon>
    </lineage>
</organism>